<comment type="function">
    <text evidence="1">Calcium-dependent lectin involved in innate immune defense. Binds mannose, fucose and N-acetylglucosamine on different microorganisms and activates the lectin complement pathway. Binds to late apoptotic cells, as well as to apoptotic blebs and to necrotic cells, but not to early apoptotic cells, facilitating their uptake by macrophages (By similarity).</text>
</comment>
<comment type="subunit">
    <text evidence="1">Oligomeric complex of 3 or more homotrimers. Interacts with MASP1 and MASP2 (By similarity). Interacts with MEP1A and MEP1B and may inhibit their catalytic activity (By similarity).</text>
</comment>
<comment type="subcellular location">
    <subcellularLocation>
        <location evidence="1">Secreted</location>
    </subcellularLocation>
</comment>
<comment type="domain">
    <text evidence="1">The coiled-coil domain mediates trimerization.</text>
</comment>
<comment type="PTM">
    <text evidence="1">Hydroxylation on proline residues within the sequence motif, GXPG, is most likely to be 4-hydroxy as this fits the requirement for 4-hydroxylation in vertebrates.</text>
</comment>
<organism>
    <name type="scientific">Gorilla gorilla gorilla</name>
    <name type="common">Western lowland gorilla</name>
    <dbReference type="NCBI Taxonomy" id="9595"/>
    <lineage>
        <taxon>Eukaryota</taxon>
        <taxon>Metazoa</taxon>
        <taxon>Chordata</taxon>
        <taxon>Craniata</taxon>
        <taxon>Vertebrata</taxon>
        <taxon>Euteleostomi</taxon>
        <taxon>Mammalia</taxon>
        <taxon>Eutheria</taxon>
        <taxon>Euarchontoglires</taxon>
        <taxon>Primates</taxon>
        <taxon>Haplorrhini</taxon>
        <taxon>Catarrhini</taxon>
        <taxon>Hominidae</taxon>
        <taxon>Gorilla</taxon>
    </lineage>
</organism>
<keyword id="KW-0106">Calcium</keyword>
<keyword id="KW-0175">Coiled coil</keyword>
<keyword id="KW-0176">Collagen</keyword>
<keyword id="KW-1018">Complement activation lectin pathway</keyword>
<keyword id="KW-0180">Complement pathway</keyword>
<keyword id="KW-1015">Disulfide bond</keyword>
<keyword id="KW-0379">Hydroxylation</keyword>
<keyword id="KW-0391">Immunity</keyword>
<keyword id="KW-0399">Innate immunity</keyword>
<keyword id="KW-0430">Lectin</keyword>
<keyword id="KW-0465">Mannose-binding</keyword>
<keyword id="KW-1185">Reference proteome</keyword>
<keyword id="KW-0677">Repeat</keyword>
<keyword id="KW-0964">Secreted</keyword>
<keyword id="KW-0732">Signal</keyword>
<protein>
    <recommendedName>
        <fullName>Mannose-binding protein C</fullName>
        <shortName>MBP-C</shortName>
    </recommendedName>
    <alternativeName>
        <fullName>MBP1</fullName>
    </alternativeName>
    <alternativeName>
        <fullName>Mannan-binding protein</fullName>
    </alternativeName>
    <alternativeName>
        <fullName>Mannose-binding lectin</fullName>
    </alternativeName>
</protein>
<gene>
    <name type="primary">MBL2</name>
</gene>
<evidence type="ECO:0000250" key="1"/>
<evidence type="ECO:0000255" key="2">
    <source>
        <dbReference type="PROSITE-ProRule" id="PRU00040"/>
    </source>
</evidence>
<evidence type="ECO:0000256" key="3">
    <source>
        <dbReference type="SAM" id="MobiDB-lite"/>
    </source>
</evidence>
<reference key="1">
    <citation type="journal article" date="2004" name="Genes Immun.">
        <title>Evolution of the mannose-binding lectin gene in primates.</title>
        <authorList>
            <person name="Verga Falzacappa M.V."/>
            <person name="Segat L."/>
            <person name="Puppini B."/>
            <person name="Amoroso A."/>
            <person name="Crovella S."/>
        </authorList>
    </citation>
    <scope>NUCLEOTIDE SEQUENCE [GENOMIC DNA]</scope>
</reference>
<proteinExistence type="inferred from homology"/>
<dbReference type="EMBL" id="AY707499">
    <property type="protein sequence ID" value="AAU11294.1"/>
    <property type="molecule type" value="Genomic_DNA"/>
</dbReference>
<dbReference type="EMBL" id="AY707496">
    <property type="protein sequence ID" value="AAU11294.1"/>
    <property type="status" value="JOINED"/>
    <property type="molecule type" value="Genomic_DNA"/>
</dbReference>
<dbReference type="EMBL" id="AY707497">
    <property type="protein sequence ID" value="AAU11294.1"/>
    <property type="status" value="JOINED"/>
    <property type="molecule type" value="Genomic_DNA"/>
</dbReference>
<dbReference type="EMBL" id="AY707498">
    <property type="protein sequence ID" value="AAU11294.1"/>
    <property type="status" value="JOINED"/>
    <property type="molecule type" value="Genomic_DNA"/>
</dbReference>
<dbReference type="RefSeq" id="XP_004049476.1">
    <property type="nucleotide sequence ID" value="XM_004049428.5"/>
</dbReference>
<dbReference type="RefSeq" id="XP_018889897.1">
    <property type="nucleotide sequence ID" value="XM_019034352.4"/>
</dbReference>
<dbReference type="SMR" id="Q66S60"/>
<dbReference type="FunCoup" id="Q66S60">
    <property type="interactions" value="311"/>
</dbReference>
<dbReference type="STRING" id="9593.ENSGGOP00000039651"/>
<dbReference type="Ensembl" id="ENSGGOT00000049812.1">
    <property type="protein sequence ID" value="ENSGGOP00000039651.1"/>
    <property type="gene ID" value="ENSGGOG00000039764.1"/>
</dbReference>
<dbReference type="GeneID" id="101148598"/>
<dbReference type="KEGG" id="ggo:101148598"/>
<dbReference type="CTD" id="4153"/>
<dbReference type="eggNOG" id="KOG4297">
    <property type="taxonomic scope" value="Eukaryota"/>
</dbReference>
<dbReference type="GeneTree" id="ENSGT00940000154368"/>
<dbReference type="HOGENOM" id="CLU_049894_3_0_1"/>
<dbReference type="InParanoid" id="Q66S60"/>
<dbReference type="OMA" id="CAKFQAS"/>
<dbReference type="OrthoDB" id="15203at9604"/>
<dbReference type="Proteomes" id="UP000001519">
    <property type="component" value="Chromosome 10"/>
</dbReference>
<dbReference type="Bgee" id="ENSGGOG00000039764">
    <property type="expression patterns" value="Expressed in liver"/>
</dbReference>
<dbReference type="GO" id="GO:0005581">
    <property type="term" value="C:collagen trimer"/>
    <property type="evidence" value="ECO:0007669"/>
    <property type="project" value="UniProtKB-KW"/>
</dbReference>
<dbReference type="GO" id="GO:0005615">
    <property type="term" value="C:extracellular space"/>
    <property type="evidence" value="ECO:0000318"/>
    <property type="project" value="GO_Central"/>
</dbReference>
<dbReference type="GO" id="GO:0005771">
    <property type="term" value="C:multivesicular body"/>
    <property type="evidence" value="ECO:0000318"/>
    <property type="project" value="GO_Central"/>
</dbReference>
<dbReference type="GO" id="GO:1905370">
    <property type="term" value="C:serine-type endopeptidase complex"/>
    <property type="evidence" value="ECO:0007669"/>
    <property type="project" value="Ensembl"/>
</dbReference>
<dbReference type="GO" id="GO:0048306">
    <property type="term" value="F:calcium-dependent protein binding"/>
    <property type="evidence" value="ECO:0007669"/>
    <property type="project" value="Ensembl"/>
</dbReference>
<dbReference type="GO" id="GO:0005537">
    <property type="term" value="F:D-mannose binding"/>
    <property type="evidence" value="ECO:0007669"/>
    <property type="project" value="UniProtKB-KW"/>
</dbReference>
<dbReference type="GO" id="GO:0042802">
    <property type="term" value="F:identical protein binding"/>
    <property type="evidence" value="ECO:0007669"/>
    <property type="project" value="Ensembl"/>
</dbReference>
<dbReference type="GO" id="GO:0005102">
    <property type="term" value="F:signaling receptor binding"/>
    <property type="evidence" value="ECO:0007669"/>
    <property type="project" value="Ensembl"/>
</dbReference>
<dbReference type="GO" id="GO:0140374">
    <property type="term" value="P:antiviral innate immune response"/>
    <property type="evidence" value="ECO:0007669"/>
    <property type="project" value="Ensembl"/>
</dbReference>
<dbReference type="GO" id="GO:0002752">
    <property type="term" value="P:cell surface pattern recognition receptor signaling pathway"/>
    <property type="evidence" value="ECO:0007669"/>
    <property type="project" value="Ensembl"/>
</dbReference>
<dbReference type="GO" id="GO:0006958">
    <property type="term" value="P:complement activation, classical pathway"/>
    <property type="evidence" value="ECO:0007669"/>
    <property type="project" value="UniProtKB-KW"/>
</dbReference>
<dbReference type="GO" id="GO:0001867">
    <property type="term" value="P:complement activation, lectin pathway"/>
    <property type="evidence" value="ECO:0007669"/>
    <property type="project" value="UniProtKB-KW"/>
</dbReference>
<dbReference type="GO" id="GO:0050830">
    <property type="term" value="P:defense response to Gram-positive bacterium"/>
    <property type="evidence" value="ECO:0007669"/>
    <property type="project" value="Ensembl"/>
</dbReference>
<dbReference type="GO" id="GO:0048525">
    <property type="term" value="P:negative regulation of viral process"/>
    <property type="evidence" value="ECO:0007669"/>
    <property type="project" value="Ensembl"/>
</dbReference>
<dbReference type="GO" id="GO:1903028">
    <property type="term" value="P:positive regulation of opsonization"/>
    <property type="evidence" value="ECO:0007669"/>
    <property type="project" value="Ensembl"/>
</dbReference>
<dbReference type="GO" id="GO:0050766">
    <property type="term" value="P:positive regulation of phagocytosis"/>
    <property type="evidence" value="ECO:0000318"/>
    <property type="project" value="GO_Central"/>
</dbReference>
<dbReference type="GO" id="GO:0006508">
    <property type="term" value="P:proteolysis"/>
    <property type="evidence" value="ECO:0007669"/>
    <property type="project" value="Ensembl"/>
</dbReference>
<dbReference type="GO" id="GO:0043129">
    <property type="term" value="P:surfactant homeostasis"/>
    <property type="evidence" value="ECO:0000318"/>
    <property type="project" value="GO_Central"/>
</dbReference>
<dbReference type="CDD" id="cd03591">
    <property type="entry name" value="CLECT_collectin_like"/>
    <property type="match status" value="1"/>
</dbReference>
<dbReference type="FunFam" id="3.10.100.10:FF:000088">
    <property type="entry name" value="Mannose-binding protein A"/>
    <property type="match status" value="1"/>
</dbReference>
<dbReference type="Gene3D" id="3.10.100.10">
    <property type="entry name" value="Mannose-Binding Protein A, subunit A"/>
    <property type="match status" value="1"/>
</dbReference>
<dbReference type="InterPro" id="IPR001304">
    <property type="entry name" value="C-type_lectin-like"/>
</dbReference>
<dbReference type="InterPro" id="IPR016186">
    <property type="entry name" value="C-type_lectin-like/link_sf"/>
</dbReference>
<dbReference type="InterPro" id="IPR018378">
    <property type="entry name" value="C-type_lectin_CS"/>
</dbReference>
<dbReference type="InterPro" id="IPR051077">
    <property type="entry name" value="Ca-dependent_lectin"/>
</dbReference>
<dbReference type="InterPro" id="IPR008160">
    <property type="entry name" value="Collagen"/>
</dbReference>
<dbReference type="InterPro" id="IPR033990">
    <property type="entry name" value="Collectin_CTLD"/>
</dbReference>
<dbReference type="InterPro" id="IPR016187">
    <property type="entry name" value="CTDL_fold"/>
</dbReference>
<dbReference type="PANTHER" id="PTHR24024:SF34">
    <property type="entry name" value="MANNOSE-BINDING PROTEIN C"/>
    <property type="match status" value="1"/>
</dbReference>
<dbReference type="PANTHER" id="PTHR24024">
    <property type="entry name" value="PULMONARY SURFACTANT-ASSOCIATED PROTEIN A"/>
    <property type="match status" value="1"/>
</dbReference>
<dbReference type="Pfam" id="PF01391">
    <property type="entry name" value="Collagen"/>
    <property type="match status" value="1"/>
</dbReference>
<dbReference type="Pfam" id="PF00059">
    <property type="entry name" value="Lectin_C"/>
    <property type="match status" value="1"/>
</dbReference>
<dbReference type="SMART" id="SM00034">
    <property type="entry name" value="CLECT"/>
    <property type="match status" value="1"/>
</dbReference>
<dbReference type="SUPFAM" id="SSF56436">
    <property type="entry name" value="C-type lectin-like"/>
    <property type="match status" value="1"/>
</dbReference>
<dbReference type="SUPFAM" id="SSF57944">
    <property type="entry name" value="Triple coiled coil domain of C-type lectins"/>
    <property type="match status" value="1"/>
</dbReference>
<dbReference type="PROSITE" id="PS00615">
    <property type="entry name" value="C_TYPE_LECTIN_1"/>
    <property type="match status" value="1"/>
</dbReference>
<dbReference type="PROSITE" id="PS50041">
    <property type="entry name" value="C_TYPE_LECTIN_2"/>
    <property type="match status" value="1"/>
</dbReference>
<name>MBL2_GORGO</name>
<sequence length="248" mass="26172">MSLFPSLPLLLLSMVAASYSETVTCEDAQKTCPAVIACSSPGINGFPGKDGRDGTKGEKGEPGQGLRGLQGPPGKLGPPGNPGPSGSPGPKGQKGDPGKSPDGDSSLAASERKALQTEMARIKKWLTFSLGKQVGNKFFLTNGEIMTFEKVKALCVKFQASVATPRNAAENGAIRNLIKEEAFLGITDEKTEGQFVDLTGNRLTYTNWNEGEPNNAGSDEDCVLLLKNGQWNDVPCSTSHLAVCEFPI</sequence>
<accession>Q66S60</accession>
<feature type="signal peptide" evidence="1">
    <location>
        <begin position="1"/>
        <end position="20"/>
    </location>
</feature>
<feature type="chain" id="PRO_0000017400" description="Mannose-binding protein C">
    <location>
        <begin position="21"/>
        <end position="248"/>
    </location>
</feature>
<feature type="domain" description="Collagen-like">
    <location>
        <begin position="42"/>
        <end position="99"/>
    </location>
</feature>
<feature type="domain" description="C-type lectin" evidence="2">
    <location>
        <begin position="134"/>
        <end position="245"/>
    </location>
</feature>
<feature type="region of interest" description="Disordered" evidence="3">
    <location>
        <begin position="43"/>
        <end position="113"/>
    </location>
</feature>
<feature type="coiled-coil region" evidence="1">
    <location>
        <begin position="112"/>
        <end position="130"/>
    </location>
</feature>
<feature type="compositionally biased region" description="Basic and acidic residues" evidence="3">
    <location>
        <begin position="49"/>
        <end position="61"/>
    </location>
</feature>
<feature type="compositionally biased region" description="Pro residues" evidence="3">
    <location>
        <begin position="75"/>
        <end position="87"/>
    </location>
</feature>
<feature type="compositionally biased region" description="Basic and acidic residues" evidence="3">
    <location>
        <begin position="93"/>
        <end position="102"/>
    </location>
</feature>
<feature type="modified residue" description="4-hydroxyproline" evidence="1">
    <location>
        <position position="47"/>
    </location>
</feature>
<feature type="modified residue" description="4-hydroxyproline" evidence="1">
    <location>
        <position position="73"/>
    </location>
</feature>
<feature type="modified residue" description="4-hydroxyproline" evidence="1">
    <location>
        <position position="79"/>
    </location>
</feature>
<feature type="modified residue" description="4-hydroxyproline" evidence="1">
    <location>
        <position position="82"/>
    </location>
</feature>
<feature type="modified residue" description="4-hydroxyproline" evidence="1">
    <location>
        <position position="88"/>
    </location>
</feature>
<feature type="disulfide bond" evidence="2">
    <location>
        <begin position="155"/>
        <end position="244"/>
    </location>
</feature>
<feature type="disulfide bond" evidence="2">
    <location>
        <begin position="222"/>
        <end position="236"/>
    </location>
</feature>